<accession>B2X1Y2</accession>
<organism>
    <name type="scientific">Oedogonium cardiacum</name>
    <name type="common">Filamentous green alga</name>
    <dbReference type="NCBI Taxonomy" id="55995"/>
    <lineage>
        <taxon>Eukaryota</taxon>
        <taxon>Viridiplantae</taxon>
        <taxon>Chlorophyta</taxon>
        <taxon>core chlorophytes</taxon>
        <taxon>Chlorophyceae</taxon>
        <taxon>OCC clade</taxon>
        <taxon>Oedogoniales</taxon>
        <taxon>Oedogoniaceae</taxon>
        <taxon>Oedogonium</taxon>
    </lineage>
</organism>
<sequence length="475" mass="52526">MAPQTETRAGAGFKAGVKDYRLTYYTPDYIVKDTDILAAFRMTPQPGVPPEECGAAVAAESSTGTWTTVWTDGLTSLDRYKGRCYDIEPVPGEENQYIAYVAYPLDLFEEGSVTNLFTSIVGNVFGFKALRALRLEDLRIPAAYAKTFQGPPHGIQVERDKLNKYGRGLLGCTIKPKLGLSAKNYGRAVYECLRGGLDFTKDDENVNSQPFMRWRDRFLFVAEAIYKAQSETGEIKGHYLNATAGTCEEMLKRAVCAKELGVPIIMHDYLTGGFTANTSLSNYCRDHGLLLHIHRAMHAVIDRQRNHGIHFRVLAKALRMSGGDHLHSGTVVGKLEGEREVTLGFVDLMRDDYIEKDRSRGIYFTQDWVSLPGVMPVASGGIHVWHMPALVEIFGDDACLQFGGGTLGHPWGNAPGAAANRVALEACTQARNEGRDLAREGGDVIRAACKWSPELAAACEVWKEIKFEFETIDKL</sequence>
<comment type="function">
    <text evidence="1">RuBisCO catalyzes two reactions: the carboxylation of D-ribulose 1,5-bisphosphate, the primary event in carbon dioxide fixation, as well as the oxidative fragmentation of the pentose substrate in the photorespiration process. Both reactions occur simultaneously and in competition at the same active site.</text>
</comment>
<comment type="catalytic activity">
    <reaction evidence="1">
        <text>2 (2R)-3-phosphoglycerate + 2 H(+) = D-ribulose 1,5-bisphosphate + CO2 + H2O</text>
        <dbReference type="Rhea" id="RHEA:23124"/>
        <dbReference type="ChEBI" id="CHEBI:15377"/>
        <dbReference type="ChEBI" id="CHEBI:15378"/>
        <dbReference type="ChEBI" id="CHEBI:16526"/>
        <dbReference type="ChEBI" id="CHEBI:57870"/>
        <dbReference type="ChEBI" id="CHEBI:58272"/>
        <dbReference type="EC" id="4.1.1.39"/>
    </reaction>
</comment>
<comment type="catalytic activity">
    <reaction evidence="1">
        <text>D-ribulose 1,5-bisphosphate + O2 = 2-phosphoglycolate + (2R)-3-phosphoglycerate + 2 H(+)</text>
        <dbReference type="Rhea" id="RHEA:36631"/>
        <dbReference type="ChEBI" id="CHEBI:15378"/>
        <dbReference type="ChEBI" id="CHEBI:15379"/>
        <dbReference type="ChEBI" id="CHEBI:57870"/>
        <dbReference type="ChEBI" id="CHEBI:58033"/>
        <dbReference type="ChEBI" id="CHEBI:58272"/>
    </reaction>
</comment>
<comment type="cofactor">
    <cofactor evidence="1">
        <name>Mg(2+)</name>
        <dbReference type="ChEBI" id="CHEBI:18420"/>
    </cofactor>
    <text evidence="1">Binds 1 Mg(2+) ion per subunit.</text>
</comment>
<comment type="subunit">
    <text evidence="1">Heterohexadecamer of 8 large chains and 8 small chains; disulfide-linked. The disulfide link is formed within the large subunit homodimers.</text>
</comment>
<comment type="subcellular location">
    <subcellularLocation>
        <location>Plastid</location>
        <location>Chloroplast</location>
    </subcellularLocation>
</comment>
<comment type="PTM">
    <text evidence="1">The disulfide bond which can form in the large chain dimeric partners within the hexadecamer appears to be associated with oxidative stress and protein turnover.</text>
</comment>
<comment type="miscellaneous">
    <text evidence="1">The basic functional RuBisCO is composed of a large chain homodimer in a 'head-to-tail' conformation. In form I RuBisCO this homodimer is arranged in a barrel-like tetramer with the small subunits forming a tetrameric 'cap' on each end of the 'barrel'.</text>
</comment>
<comment type="similarity">
    <text evidence="1">Belongs to the RuBisCO large chain family. Type I subfamily.</text>
</comment>
<feature type="propeptide" id="PRO_0000355790" evidence="1">
    <location>
        <begin position="1"/>
        <end position="2"/>
    </location>
</feature>
<feature type="chain" id="PRO_0000355791" description="Ribulose bisphosphate carboxylase large chain">
    <location>
        <begin position="3"/>
        <end position="475"/>
    </location>
</feature>
<feature type="active site" description="Proton acceptor" evidence="1">
    <location>
        <position position="175"/>
    </location>
</feature>
<feature type="active site" description="Proton acceptor" evidence="1">
    <location>
        <position position="294"/>
    </location>
</feature>
<feature type="binding site" description="in homodimeric partner" evidence="1">
    <location>
        <position position="123"/>
    </location>
    <ligand>
        <name>substrate</name>
    </ligand>
</feature>
<feature type="binding site" evidence="1">
    <location>
        <position position="173"/>
    </location>
    <ligand>
        <name>substrate</name>
    </ligand>
</feature>
<feature type="binding site" evidence="1">
    <location>
        <position position="177"/>
    </location>
    <ligand>
        <name>substrate</name>
    </ligand>
</feature>
<feature type="binding site" description="via carbamate group" evidence="1">
    <location>
        <position position="201"/>
    </location>
    <ligand>
        <name>Mg(2+)</name>
        <dbReference type="ChEBI" id="CHEBI:18420"/>
    </ligand>
</feature>
<feature type="binding site" evidence="1">
    <location>
        <position position="203"/>
    </location>
    <ligand>
        <name>Mg(2+)</name>
        <dbReference type="ChEBI" id="CHEBI:18420"/>
    </ligand>
</feature>
<feature type="binding site" evidence="1">
    <location>
        <position position="204"/>
    </location>
    <ligand>
        <name>Mg(2+)</name>
        <dbReference type="ChEBI" id="CHEBI:18420"/>
    </ligand>
</feature>
<feature type="binding site" evidence="1">
    <location>
        <position position="295"/>
    </location>
    <ligand>
        <name>substrate</name>
    </ligand>
</feature>
<feature type="binding site" evidence="1">
    <location>
        <position position="327"/>
    </location>
    <ligand>
        <name>substrate</name>
    </ligand>
</feature>
<feature type="binding site" evidence="1">
    <location>
        <position position="379"/>
    </location>
    <ligand>
        <name>substrate</name>
    </ligand>
</feature>
<feature type="site" description="Transition state stabilizer" evidence="1">
    <location>
        <position position="334"/>
    </location>
</feature>
<feature type="modified residue" description="N-acetylproline" evidence="1">
    <location>
        <position position="3"/>
    </location>
</feature>
<feature type="modified residue" description="N6,N6,N6-trimethyllysine" evidence="1">
    <location>
        <position position="14"/>
    </location>
</feature>
<feature type="modified residue" description="N6-carboxylysine" evidence="1">
    <location>
        <position position="201"/>
    </location>
</feature>
<feature type="disulfide bond" description="Interchain; in linked form" evidence="1">
    <location>
        <position position="247"/>
    </location>
</feature>
<reference key="1">
    <citation type="journal article" date="2008" name="J. Phycol.">
        <title>Deep division in the Chlorophyceae (Chlorophyta) revealed by chloroplast phylogenomic analyseS.</title>
        <authorList>
            <person name="Turmel M."/>
            <person name="Brouard J.-S."/>
            <person name="Gagnon C."/>
            <person name="Otis C."/>
            <person name="Lemieux C."/>
        </authorList>
        <dbReference type="AGRICOLA" id="IND44059346"/>
    </citation>
    <scope>NUCLEOTIDE SEQUENCE [GENOMIC DNA]</scope>
    <source>
        <strain>SAG 575-1b / CCAP 575/1B / UTEX LB 40</strain>
    </source>
</reference>
<reference key="2">
    <citation type="journal article" date="2008" name="BMC Genomics">
        <title>Chloroplast DNA sequence of the green alga Oedogonium cardiacum (Chlorophyceae): unique genome architecture, derived characters shared with the Chaetophorales and novel genes acquired through horizontal transfer.</title>
        <authorList>
            <person name="Brouard J.-S."/>
            <person name="Otis C."/>
            <person name="Lemieux C."/>
            <person name="Turmel M."/>
        </authorList>
    </citation>
    <scope>NUCLEOTIDE SEQUENCE [LARGE SCALE GENOMIC DNA]</scope>
    <source>
        <strain>SAG 575-1b / CCAP 575/1B / UTEX LB 40</strain>
    </source>
</reference>
<dbReference type="EC" id="4.1.1.39" evidence="1"/>
<dbReference type="EMBL" id="EF587355">
    <property type="protein sequence ID" value="ABU88195.1"/>
    <property type="molecule type" value="Genomic_DNA"/>
</dbReference>
<dbReference type="EMBL" id="EU677193">
    <property type="protein sequence ID" value="ACC97288.1"/>
    <property type="molecule type" value="Genomic_DNA"/>
</dbReference>
<dbReference type="EMBL" id="EU677193">
    <property type="protein sequence ID" value="ACC97291.1"/>
    <property type="molecule type" value="Genomic_DNA"/>
</dbReference>
<dbReference type="RefSeq" id="YP_002000422.1">
    <property type="nucleotide sequence ID" value="NC_011031.1"/>
</dbReference>
<dbReference type="RefSeq" id="YP_002000455.1">
    <property type="nucleotide sequence ID" value="NC_011031.1"/>
</dbReference>
<dbReference type="SMR" id="B2X1Y2"/>
<dbReference type="GeneID" id="6440039"/>
<dbReference type="GeneID" id="6440113"/>
<dbReference type="GO" id="GO:0009507">
    <property type="term" value="C:chloroplast"/>
    <property type="evidence" value="ECO:0007669"/>
    <property type="project" value="UniProtKB-SubCell"/>
</dbReference>
<dbReference type="GO" id="GO:0000287">
    <property type="term" value="F:magnesium ion binding"/>
    <property type="evidence" value="ECO:0007669"/>
    <property type="project" value="UniProtKB-UniRule"/>
</dbReference>
<dbReference type="GO" id="GO:0004497">
    <property type="term" value="F:monooxygenase activity"/>
    <property type="evidence" value="ECO:0007669"/>
    <property type="project" value="UniProtKB-KW"/>
</dbReference>
<dbReference type="GO" id="GO:0016984">
    <property type="term" value="F:ribulose-bisphosphate carboxylase activity"/>
    <property type="evidence" value="ECO:0007669"/>
    <property type="project" value="UniProtKB-UniRule"/>
</dbReference>
<dbReference type="GO" id="GO:0009853">
    <property type="term" value="P:photorespiration"/>
    <property type="evidence" value="ECO:0007669"/>
    <property type="project" value="UniProtKB-KW"/>
</dbReference>
<dbReference type="GO" id="GO:0019253">
    <property type="term" value="P:reductive pentose-phosphate cycle"/>
    <property type="evidence" value="ECO:0007669"/>
    <property type="project" value="UniProtKB-UniRule"/>
</dbReference>
<dbReference type="CDD" id="cd08212">
    <property type="entry name" value="RuBisCO_large_I"/>
    <property type="match status" value="1"/>
</dbReference>
<dbReference type="FunFam" id="3.20.20.110:FF:000001">
    <property type="entry name" value="Ribulose bisphosphate carboxylase large chain"/>
    <property type="match status" value="1"/>
</dbReference>
<dbReference type="FunFam" id="3.30.70.150:FF:000001">
    <property type="entry name" value="Ribulose bisphosphate carboxylase large chain"/>
    <property type="match status" value="1"/>
</dbReference>
<dbReference type="Gene3D" id="3.20.20.110">
    <property type="entry name" value="Ribulose bisphosphate carboxylase, large subunit, C-terminal domain"/>
    <property type="match status" value="1"/>
</dbReference>
<dbReference type="Gene3D" id="3.30.70.150">
    <property type="entry name" value="RuBisCO large subunit, N-terminal domain"/>
    <property type="match status" value="1"/>
</dbReference>
<dbReference type="HAMAP" id="MF_01338">
    <property type="entry name" value="RuBisCO_L_type1"/>
    <property type="match status" value="1"/>
</dbReference>
<dbReference type="InterPro" id="IPR033966">
    <property type="entry name" value="RuBisCO"/>
</dbReference>
<dbReference type="InterPro" id="IPR020878">
    <property type="entry name" value="RuBisCo_large_chain_AS"/>
</dbReference>
<dbReference type="InterPro" id="IPR000685">
    <property type="entry name" value="RuBisCO_lsu_C"/>
</dbReference>
<dbReference type="InterPro" id="IPR036376">
    <property type="entry name" value="RuBisCO_lsu_C_sf"/>
</dbReference>
<dbReference type="InterPro" id="IPR017443">
    <property type="entry name" value="RuBisCO_lsu_fd_N"/>
</dbReference>
<dbReference type="InterPro" id="IPR036422">
    <property type="entry name" value="RuBisCO_lsu_N_sf"/>
</dbReference>
<dbReference type="InterPro" id="IPR020888">
    <property type="entry name" value="RuBisCO_lsuI"/>
</dbReference>
<dbReference type="NCBIfam" id="NF003252">
    <property type="entry name" value="PRK04208.1"/>
    <property type="match status" value="1"/>
</dbReference>
<dbReference type="PANTHER" id="PTHR42704">
    <property type="entry name" value="RIBULOSE BISPHOSPHATE CARBOXYLASE"/>
    <property type="match status" value="1"/>
</dbReference>
<dbReference type="PANTHER" id="PTHR42704:SF17">
    <property type="entry name" value="RIBULOSE BISPHOSPHATE CARBOXYLASE LARGE CHAIN"/>
    <property type="match status" value="1"/>
</dbReference>
<dbReference type="Pfam" id="PF00016">
    <property type="entry name" value="RuBisCO_large"/>
    <property type="match status" value="1"/>
</dbReference>
<dbReference type="Pfam" id="PF02788">
    <property type="entry name" value="RuBisCO_large_N"/>
    <property type="match status" value="1"/>
</dbReference>
<dbReference type="SFLD" id="SFLDG01052">
    <property type="entry name" value="RuBisCO"/>
    <property type="match status" value="1"/>
</dbReference>
<dbReference type="SFLD" id="SFLDS00014">
    <property type="entry name" value="RuBisCO"/>
    <property type="match status" value="1"/>
</dbReference>
<dbReference type="SFLD" id="SFLDG00301">
    <property type="entry name" value="RuBisCO-like_proteins"/>
    <property type="match status" value="1"/>
</dbReference>
<dbReference type="SUPFAM" id="SSF51649">
    <property type="entry name" value="RuBisCo, C-terminal domain"/>
    <property type="match status" value="1"/>
</dbReference>
<dbReference type="SUPFAM" id="SSF54966">
    <property type="entry name" value="RuBisCO, large subunit, small (N-terminal) domain"/>
    <property type="match status" value="1"/>
</dbReference>
<dbReference type="PROSITE" id="PS00157">
    <property type="entry name" value="RUBISCO_LARGE"/>
    <property type="match status" value="1"/>
</dbReference>
<keyword id="KW-0007">Acetylation</keyword>
<keyword id="KW-0113">Calvin cycle</keyword>
<keyword id="KW-0120">Carbon dioxide fixation</keyword>
<keyword id="KW-0150">Chloroplast</keyword>
<keyword id="KW-1015">Disulfide bond</keyword>
<keyword id="KW-0456">Lyase</keyword>
<keyword id="KW-0460">Magnesium</keyword>
<keyword id="KW-0479">Metal-binding</keyword>
<keyword id="KW-0488">Methylation</keyword>
<keyword id="KW-0503">Monooxygenase</keyword>
<keyword id="KW-0560">Oxidoreductase</keyword>
<keyword id="KW-0601">Photorespiration</keyword>
<keyword id="KW-0602">Photosynthesis</keyword>
<keyword id="KW-0934">Plastid</keyword>
<gene>
    <name evidence="1" type="primary">rbcL</name>
</gene>
<evidence type="ECO:0000255" key="1">
    <source>
        <dbReference type="HAMAP-Rule" id="MF_01338"/>
    </source>
</evidence>
<protein>
    <recommendedName>
        <fullName evidence="1">Ribulose bisphosphate carboxylase large chain</fullName>
        <shortName evidence="1">RuBisCO large subunit</shortName>
        <ecNumber evidence="1">4.1.1.39</ecNumber>
    </recommendedName>
</protein>
<name>RBL_OEDCA</name>
<proteinExistence type="inferred from homology"/>
<geneLocation type="chloroplast"/>